<dbReference type="EC" id="1.2.1.8" evidence="2"/>
<dbReference type="EMBL" id="AE005174">
    <property type="protein sequence ID" value="AAG54654.1"/>
    <property type="molecule type" value="Genomic_DNA"/>
</dbReference>
<dbReference type="EMBL" id="BA000007">
    <property type="protein sequence ID" value="BAB33781.2"/>
    <property type="molecule type" value="Genomic_DNA"/>
</dbReference>
<dbReference type="PIR" id="B85524">
    <property type="entry name" value="B85524"/>
</dbReference>
<dbReference type="PIR" id="F90673">
    <property type="entry name" value="F90673"/>
</dbReference>
<dbReference type="RefSeq" id="NP_308385.1">
    <property type="nucleotide sequence ID" value="NC_002695.1"/>
</dbReference>
<dbReference type="RefSeq" id="WP_000089099.1">
    <property type="nucleotide sequence ID" value="NZ_VOAI01000005.1"/>
</dbReference>
<dbReference type="SMR" id="Q7AH91"/>
<dbReference type="STRING" id="155864.Z0399"/>
<dbReference type="GeneID" id="914459"/>
<dbReference type="KEGG" id="ece:Z0399"/>
<dbReference type="KEGG" id="ecs:ECs_0358"/>
<dbReference type="PATRIC" id="fig|386585.9.peg.450"/>
<dbReference type="eggNOG" id="COG1012">
    <property type="taxonomic scope" value="Bacteria"/>
</dbReference>
<dbReference type="HOGENOM" id="CLU_005391_0_0_6"/>
<dbReference type="OMA" id="CREGIRM"/>
<dbReference type="UniPathway" id="UPA00529">
    <property type="reaction ID" value="UER00386"/>
</dbReference>
<dbReference type="Proteomes" id="UP000000558">
    <property type="component" value="Chromosome"/>
</dbReference>
<dbReference type="Proteomes" id="UP000002519">
    <property type="component" value="Chromosome"/>
</dbReference>
<dbReference type="GO" id="GO:0008802">
    <property type="term" value="F:betaine-aldehyde dehydrogenase (NAD+) activity"/>
    <property type="evidence" value="ECO:0007669"/>
    <property type="project" value="UniProtKB-UniRule"/>
</dbReference>
<dbReference type="GO" id="GO:0046872">
    <property type="term" value="F:metal ion binding"/>
    <property type="evidence" value="ECO:0007669"/>
    <property type="project" value="UniProtKB-KW"/>
</dbReference>
<dbReference type="GO" id="GO:0019285">
    <property type="term" value="P:glycine betaine biosynthetic process from choline"/>
    <property type="evidence" value="ECO:0007669"/>
    <property type="project" value="UniProtKB-UniRule"/>
</dbReference>
<dbReference type="CDD" id="cd07090">
    <property type="entry name" value="ALDH_F9_TMBADH"/>
    <property type="match status" value="1"/>
</dbReference>
<dbReference type="FunFam" id="3.40.309.10:FF:000014">
    <property type="entry name" value="NAD/NADP-dependent betaine aldehyde dehydrogenase"/>
    <property type="match status" value="1"/>
</dbReference>
<dbReference type="FunFam" id="3.40.605.10:FF:000007">
    <property type="entry name" value="NAD/NADP-dependent betaine aldehyde dehydrogenase"/>
    <property type="match status" value="1"/>
</dbReference>
<dbReference type="Gene3D" id="3.40.605.10">
    <property type="entry name" value="Aldehyde Dehydrogenase, Chain A, domain 1"/>
    <property type="match status" value="1"/>
</dbReference>
<dbReference type="Gene3D" id="3.40.309.10">
    <property type="entry name" value="Aldehyde Dehydrogenase, Chain A, domain 2"/>
    <property type="match status" value="1"/>
</dbReference>
<dbReference type="HAMAP" id="MF_00804">
    <property type="entry name" value="BADH"/>
    <property type="match status" value="1"/>
</dbReference>
<dbReference type="InterPro" id="IPR016161">
    <property type="entry name" value="Ald_DH/histidinol_DH"/>
</dbReference>
<dbReference type="InterPro" id="IPR016163">
    <property type="entry name" value="Ald_DH_C"/>
</dbReference>
<dbReference type="InterPro" id="IPR016160">
    <property type="entry name" value="Ald_DH_CS_CYS"/>
</dbReference>
<dbReference type="InterPro" id="IPR029510">
    <property type="entry name" value="Ald_DH_CS_GLU"/>
</dbReference>
<dbReference type="InterPro" id="IPR016162">
    <property type="entry name" value="Ald_DH_N"/>
</dbReference>
<dbReference type="InterPro" id="IPR015590">
    <property type="entry name" value="Aldehyde_DH_dom"/>
</dbReference>
<dbReference type="InterPro" id="IPR011264">
    <property type="entry name" value="BADH"/>
</dbReference>
<dbReference type="NCBIfam" id="TIGR01804">
    <property type="entry name" value="BADH"/>
    <property type="match status" value="1"/>
</dbReference>
<dbReference type="NCBIfam" id="NF009725">
    <property type="entry name" value="PRK13252.1"/>
    <property type="match status" value="1"/>
</dbReference>
<dbReference type="PANTHER" id="PTHR11699">
    <property type="entry name" value="ALDEHYDE DEHYDROGENASE-RELATED"/>
    <property type="match status" value="1"/>
</dbReference>
<dbReference type="Pfam" id="PF00171">
    <property type="entry name" value="Aldedh"/>
    <property type="match status" value="1"/>
</dbReference>
<dbReference type="SUPFAM" id="SSF53720">
    <property type="entry name" value="ALDH-like"/>
    <property type="match status" value="1"/>
</dbReference>
<dbReference type="PROSITE" id="PS00070">
    <property type="entry name" value="ALDEHYDE_DEHYDR_CYS"/>
    <property type="match status" value="1"/>
</dbReference>
<dbReference type="PROSITE" id="PS00687">
    <property type="entry name" value="ALDEHYDE_DEHYDR_GLU"/>
    <property type="match status" value="1"/>
</dbReference>
<gene>
    <name evidence="2" type="primary">betB</name>
    <name type="ordered locus">Z0399</name>
    <name type="ordered locus">ECs0358</name>
</gene>
<protein>
    <recommendedName>
        <fullName evidence="2">Betaine aldehyde dehydrogenase</fullName>
        <shortName evidence="2">BADH</shortName>
        <ecNumber evidence="2">1.2.1.8</ecNumber>
    </recommendedName>
</protein>
<organism>
    <name type="scientific">Escherichia coli O157:H7</name>
    <dbReference type="NCBI Taxonomy" id="83334"/>
    <lineage>
        <taxon>Bacteria</taxon>
        <taxon>Pseudomonadati</taxon>
        <taxon>Pseudomonadota</taxon>
        <taxon>Gammaproteobacteria</taxon>
        <taxon>Enterobacterales</taxon>
        <taxon>Enterobacteriaceae</taxon>
        <taxon>Escherichia</taxon>
    </lineage>
</organism>
<proteinExistence type="inferred from homology"/>
<feature type="initiator methionine" description="Removed" evidence="1">
    <location>
        <position position="1"/>
    </location>
</feature>
<feature type="chain" id="PRO_0000056542" description="Betaine aldehyde dehydrogenase">
    <location>
        <begin position="2"/>
        <end position="490"/>
    </location>
</feature>
<feature type="active site" description="Charge relay system" evidence="2">
    <location>
        <position position="162"/>
    </location>
</feature>
<feature type="active site" description="Proton acceptor" evidence="2">
    <location>
        <position position="252"/>
    </location>
</feature>
<feature type="active site" description="Nucleophile" evidence="2">
    <location>
        <position position="286"/>
    </location>
</feature>
<feature type="active site" description="Charge relay system" evidence="2">
    <location>
        <position position="464"/>
    </location>
</feature>
<feature type="binding site" evidence="2">
    <location>
        <position position="26"/>
    </location>
    <ligand>
        <name>K(+)</name>
        <dbReference type="ChEBI" id="CHEBI:29103"/>
        <label>1</label>
    </ligand>
</feature>
<feature type="binding site" evidence="2">
    <location>
        <position position="27"/>
    </location>
    <ligand>
        <name>K(+)</name>
        <dbReference type="ChEBI" id="CHEBI:29103"/>
        <label>1</label>
    </ligand>
</feature>
<feature type="binding site" evidence="2">
    <location>
        <position position="93"/>
    </location>
    <ligand>
        <name>K(+)</name>
        <dbReference type="ChEBI" id="CHEBI:29103"/>
        <label>1</label>
    </ligand>
</feature>
<feature type="binding site" evidence="2">
    <location>
        <begin position="150"/>
        <end position="152"/>
    </location>
    <ligand>
        <name>NAD(+)</name>
        <dbReference type="ChEBI" id="CHEBI:57540"/>
    </ligand>
</feature>
<feature type="binding site" evidence="2">
    <location>
        <begin position="176"/>
        <end position="179"/>
    </location>
    <ligand>
        <name>NAD(+)</name>
        <dbReference type="ChEBI" id="CHEBI:57540"/>
    </ligand>
</feature>
<feature type="binding site" evidence="2">
    <location>
        <position position="180"/>
    </location>
    <ligand>
        <name>K(+)</name>
        <dbReference type="ChEBI" id="CHEBI:29103"/>
        <label>1</label>
    </ligand>
</feature>
<feature type="binding site" evidence="2">
    <location>
        <begin position="230"/>
        <end position="233"/>
    </location>
    <ligand>
        <name>NAD(+)</name>
        <dbReference type="ChEBI" id="CHEBI:57540"/>
    </ligand>
</feature>
<feature type="binding site" evidence="2">
    <location>
        <position position="246"/>
    </location>
    <ligand>
        <name>K(+)</name>
        <dbReference type="ChEBI" id="CHEBI:29103"/>
        <label>2</label>
    </ligand>
</feature>
<feature type="binding site" evidence="2">
    <location>
        <position position="254"/>
    </location>
    <ligand>
        <name>NAD(+)</name>
        <dbReference type="ChEBI" id="CHEBI:57540"/>
    </ligand>
</feature>
<feature type="binding site" description="covalent" evidence="2">
    <location>
        <position position="286"/>
    </location>
    <ligand>
        <name>NAD(+)</name>
        <dbReference type="ChEBI" id="CHEBI:57540"/>
    </ligand>
</feature>
<feature type="binding site" evidence="2">
    <location>
        <position position="387"/>
    </location>
    <ligand>
        <name>NAD(+)</name>
        <dbReference type="ChEBI" id="CHEBI:57540"/>
    </ligand>
</feature>
<feature type="binding site" evidence="2">
    <location>
        <position position="457"/>
    </location>
    <ligand>
        <name>K(+)</name>
        <dbReference type="ChEBI" id="CHEBI:29103"/>
        <label>2</label>
    </ligand>
</feature>
<feature type="binding site" evidence="2">
    <location>
        <position position="460"/>
    </location>
    <ligand>
        <name>K(+)</name>
        <dbReference type="ChEBI" id="CHEBI:29103"/>
        <label>2</label>
    </ligand>
</feature>
<feature type="site" description="Seems to be a necessary countercharge to the potassium cations" evidence="2">
    <location>
        <position position="248"/>
    </location>
</feature>
<feature type="modified residue" description="Cysteine sulfenic acid (-SOH)" evidence="2">
    <location>
        <position position="286"/>
    </location>
</feature>
<accession>Q7AH91</accession>
<accession>Q8XEC9</accession>
<keyword id="KW-0479">Metal-binding</keyword>
<keyword id="KW-0520">NAD</keyword>
<keyword id="KW-0521">NADP</keyword>
<keyword id="KW-0558">Oxidation</keyword>
<keyword id="KW-0560">Oxidoreductase</keyword>
<keyword id="KW-0630">Potassium</keyword>
<keyword id="KW-1185">Reference proteome</keyword>
<sequence>MSRMAEQQLYIHGGYTSATSGRTFETINPANGNVLATVQAAGREDVDRAVKSAQQGQKIWAAMTAMERSRILRRAVDILRERNDELAKLETLDTGKAYSETSTVDIVTGADVLEYYAGLIPSLEGSQIPLRETSFVYTRREPLGVVAGIGAWNYPIQIALWKSAPALAAGNAMIFKPSEVTPLTALKLAEIYSEAGLPDGVFNVLPGVGAETGQYLTEHPGIAKVSFTGGVASGKKVMANSAASSLKEVTMELGGKSPLIVFDDADLDLAADIAMMANFFSSGQVCTNGTRVFVPAKCNAAFEQKILARVERIRAGDVFDPQTNFGPLVSFPHRDNVLRYIAKGKEEGARVLCGGDVLKGDGLDNGAWVAPTVFTDCSDEMTIVREEIFGPVMSILTYESEDEVIRRANDTDYGLAAGIVTADLNRAHRVIHQLEAGICWINTWGESPAEMPVGGYKHSGIGRENGVMTLQSYTQVKSIQVEMAKFQSIF</sequence>
<name>BETB_ECO57</name>
<reference key="1">
    <citation type="journal article" date="2001" name="Nature">
        <title>Genome sequence of enterohaemorrhagic Escherichia coli O157:H7.</title>
        <authorList>
            <person name="Perna N.T."/>
            <person name="Plunkett G. III"/>
            <person name="Burland V."/>
            <person name="Mau B."/>
            <person name="Glasner J.D."/>
            <person name="Rose D.J."/>
            <person name="Mayhew G.F."/>
            <person name="Evans P.S."/>
            <person name="Gregor J."/>
            <person name="Kirkpatrick H.A."/>
            <person name="Posfai G."/>
            <person name="Hackett J."/>
            <person name="Klink S."/>
            <person name="Boutin A."/>
            <person name="Shao Y."/>
            <person name="Miller L."/>
            <person name="Grotbeck E.J."/>
            <person name="Davis N.W."/>
            <person name="Lim A."/>
            <person name="Dimalanta E.T."/>
            <person name="Potamousis K."/>
            <person name="Apodaca J."/>
            <person name="Anantharaman T.S."/>
            <person name="Lin J."/>
            <person name="Yen G."/>
            <person name="Schwartz D.C."/>
            <person name="Welch R.A."/>
            <person name="Blattner F.R."/>
        </authorList>
    </citation>
    <scope>NUCLEOTIDE SEQUENCE [LARGE SCALE GENOMIC DNA]</scope>
    <source>
        <strain>O157:H7 / EDL933 / ATCC 700927 / EHEC</strain>
    </source>
</reference>
<reference key="2">
    <citation type="journal article" date="2001" name="DNA Res.">
        <title>Complete genome sequence of enterohemorrhagic Escherichia coli O157:H7 and genomic comparison with a laboratory strain K-12.</title>
        <authorList>
            <person name="Hayashi T."/>
            <person name="Makino K."/>
            <person name="Ohnishi M."/>
            <person name="Kurokawa K."/>
            <person name="Ishii K."/>
            <person name="Yokoyama K."/>
            <person name="Han C.-G."/>
            <person name="Ohtsubo E."/>
            <person name="Nakayama K."/>
            <person name="Murata T."/>
            <person name="Tanaka M."/>
            <person name="Tobe T."/>
            <person name="Iida T."/>
            <person name="Takami H."/>
            <person name="Honda T."/>
            <person name="Sasakawa C."/>
            <person name="Ogasawara N."/>
            <person name="Yasunaga T."/>
            <person name="Kuhara S."/>
            <person name="Shiba T."/>
            <person name="Hattori M."/>
            <person name="Shinagawa H."/>
        </authorList>
    </citation>
    <scope>NUCLEOTIDE SEQUENCE [LARGE SCALE GENOMIC DNA]</scope>
    <source>
        <strain>O157:H7 / Sakai / RIMD 0509952 / EHEC</strain>
    </source>
</reference>
<evidence type="ECO:0000250" key="1"/>
<evidence type="ECO:0000255" key="2">
    <source>
        <dbReference type="HAMAP-Rule" id="MF_00804"/>
    </source>
</evidence>
<comment type="function">
    <text evidence="2">Involved in the biosynthesis of the osmoprotectant glycine betaine. Catalyzes the irreversible oxidation of betaine aldehyde to the corresponding acid.</text>
</comment>
<comment type="catalytic activity">
    <reaction evidence="2">
        <text>betaine aldehyde + NAD(+) + H2O = glycine betaine + NADH + 2 H(+)</text>
        <dbReference type="Rhea" id="RHEA:15305"/>
        <dbReference type="ChEBI" id="CHEBI:15377"/>
        <dbReference type="ChEBI" id="CHEBI:15378"/>
        <dbReference type="ChEBI" id="CHEBI:15710"/>
        <dbReference type="ChEBI" id="CHEBI:17750"/>
        <dbReference type="ChEBI" id="CHEBI:57540"/>
        <dbReference type="ChEBI" id="CHEBI:57945"/>
        <dbReference type="EC" id="1.2.1.8"/>
    </reaction>
    <physiologicalReaction direction="left-to-right" evidence="2">
        <dbReference type="Rhea" id="RHEA:15306"/>
    </physiologicalReaction>
</comment>
<comment type="cofactor">
    <cofactor evidence="2">
        <name>K(+)</name>
        <dbReference type="ChEBI" id="CHEBI:29103"/>
    </cofactor>
    <text evidence="2">Binds 2 potassium ions per subunit.</text>
</comment>
<comment type="pathway">
    <text evidence="2">Amine and polyamine biosynthesis; betaine biosynthesis via choline pathway; betaine from betaine aldehyde: step 1/1.</text>
</comment>
<comment type="subunit">
    <text evidence="2">Dimer of dimers.</text>
</comment>
<comment type="similarity">
    <text evidence="2">Belongs to the aldehyde dehydrogenase family.</text>
</comment>